<evidence type="ECO:0000250" key="1"/>
<evidence type="ECO:0000255" key="2"/>
<evidence type="ECO:0000305" key="3"/>
<reference key="1">
    <citation type="journal article" date="2001" name="Mol. Biol. Evol.">
        <title>Mechanisms for evolving hypervariability: the case of conopeptides.</title>
        <authorList>
            <person name="Conticello S.G."/>
            <person name="Gilad Y."/>
            <person name="Avidan N."/>
            <person name="Ben-Asher E."/>
            <person name="Levy Z."/>
            <person name="Fainzilber M."/>
        </authorList>
    </citation>
    <scope>NUCLEOTIDE SEQUENCE [MRNA]</scope>
    <source>
        <tissue>Venom duct</tissue>
    </source>
</reference>
<dbReference type="EMBL" id="AF215047">
    <property type="protein sequence ID" value="AAG60475.1"/>
    <property type="molecule type" value="mRNA"/>
</dbReference>
<dbReference type="ConoServer" id="734">
    <property type="toxin name" value="Ar6.5 precursor"/>
</dbReference>
<dbReference type="GO" id="GO:0005576">
    <property type="term" value="C:extracellular region"/>
    <property type="evidence" value="ECO:0007669"/>
    <property type="project" value="UniProtKB-SubCell"/>
</dbReference>
<dbReference type="GO" id="GO:0008200">
    <property type="term" value="F:ion channel inhibitor activity"/>
    <property type="evidence" value="ECO:0007669"/>
    <property type="project" value="InterPro"/>
</dbReference>
<dbReference type="GO" id="GO:0090729">
    <property type="term" value="F:toxin activity"/>
    <property type="evidence" value="ECO:0007669"/>
    <property type="project" value="UniProtKB-KW"/>
</dbReference>
<dbReference type="InterPro" id="IPR004214">
    <property type="entry name" value="Conotoxin"/>
</dbReference>
<dbReference type="Pfam" id="PF02950">
    <property type="entry name" value="Conotoxin"/>
    <property type="match status" value="1"/>
</dbReference>
<sequence>MKLTCVLIVAVLFLTACQLIAADDSRDLKRFSRRKMRDGMLNTKNTKRQCLPPLSLCTMDDDECCDDCILFLCLVTS</sequence>
<keyword id="KW-0165">Cleavage on pair of basic residues</keyword>
<keyword id="KW-1015">Disulfide bond</keyword>
<keyword id="KW-0960">Knottin</keyword>
<keyword id="KW-0528">Neurotoxin</keyword>
<keyword id="KW-0873">Pyrrolidone carboxylic acid</keyword>
<keyword id="KW-0964">Secreted</keyword>
<keyword id="KW-0732">Signal</keyword>
<keyword id="KW-0800">Toxin</keyword>
<feature type="signal peptide" evidence="2">
    <location>
        <begin position="1"/>
        <end position="22"/>
    </location>
</feature>
<feature type="propeptide" id="PRO_0000404772" evidence="1">
    <location>
        <begin position="23"/>
        <end position="46"/>
    </location>
</feature>
<feature type="peptide" id="PRO_0000404773" description="Conotoxin ArMKLT2-022">
    <location>
        <begin position="49"/>
        <end position="77"/>
    </location>
</feature>
<feature type="modified residue" description="Pyrrolidone carboxylic acid" evidence="1">
    <location>
        <position position="49"/>
    </location>
</feature>
<feature type="disulfide bond" evidence="1">
    <location>
        <begin position="50"/>
        <end position="65"/>
    </location>
</feature>
<feature type="disulfide bond" evidence="1">
    <location>
        <begin position="57"/>
        <end position="68"/>
    </location>
</feature>
<feature type="disulfide bond" evidence="1">
    <location>
        <begin position="64"/>
        <end position="73"/>
    </location>
</feature>
<accession>Q9BP91</accession>
<protein>
    <recommendedName>
        <fullName>Conotoxin ArMKLT2-022</fullName>
    </recommendedName>
</protein>
<proteinExistence type="evidence at transcript level"/>
<name>O165_CONAE</name>
<comment type="subcellular location">
    <subcellularLocation>
        <location evidence="1">Secreted</location>
    </subcellularLocation>
</comment>
<comment type="tissue specificity">
    <text>Expressed by the venom duct.</text>
</comment>
<comment type="domain">
    <text evidence="1">The presence of a 'disulfide through disulfide knot' structurally defines this protein as a knottin.</text>
</comment>
<comment type="domain">
    <text>The cysteine framework is VI/VII (C-C-CC-C-C).</text>
</comment>
<comment type="similarity">
    <text evidence="3">Belongs to the conotoxin O1 superfamily.</text>
</comment>
<organism>
    <name type="scientific">Conus arenatus</name>
    <name type="common">Sand-dusted cone</name>
    <dbReference type="NCBI Taxonomy" id="89451"/>
    <lineage>
        <taxon>Eukaryota</taxon>
        <taxon>Metazoa</taxon>
        <taxon>Spiralia</taxon>
        <taxon>Lophotrochozoa</taxon>
        <taxon>Mollusca</taxon>
        <taxon>Gastropoda</taxon>
        <taxon>Caenogastropoda</taxon>
        <taxon>Neogastropoda</taxon>
        <taxon>Conoidea</taxon>
        <taxon>Conidae</taxon>
        <taxon>Conus</taxon>
    </lineage>
</organism>